<evidence type="ECO:0000255" key="1">
    <source>
        <dbReference type="HAMAP-Rule" id="MF_03215"/>
    </source>
</evidence>
<keyword id="KW-0067">ATP-binding</keyword>
<keyword id="KW-0119">Carbohydrate metabolism</keyword>
<keyword id="KW-0963">Cytoplasm</keyword>
<keyword id="KW-0418">Kinase</keyword>
<keyword id="KW-0460">Magnesium</keyword>
<keyword id="KW-0479">Metal-binding</keyword>
<keyword id="KW-0547">Nucleotide-binding</keyword>
<keyword id="KW-0539">Nucleus</keyword>
<keyword id="KW-0630">Potassium</keyword>
<keyword id="KW-1185">Reference proteome</keyword>
<keyword id="KW-0808">Transferase</keyword>
<protein>
    <recommendedName>
        <fullName evidence="1">Ribokinase</fullName>
        <shortName evidence="1">RK</shortName>
        <ecNumber evidence="1">2.7.1.15</ecNumber>
    </recommendedName>
</protein>
<reference key="1">
    <citation type="journal article" date="2005" name="Nature">
        <title>The genome of the social amoeba Dictyostelium discoideum.</title>
        <authorList>
            <person name="Eichinger L."/>
            <person name="Pachebat J.A."/>
            <person name="Gloeckner G."/>
            <person name="Rajandream M.A."/>
            <person name="Sucgang R."/>
            <person name="Berriman M."/>
            <person name="Song J."/>
            <person name="Olsen R."/>
            <person name="Szafranski K."/>
            <person name="Xu Q."/>
            <person name="Tunggal B."/>
            <person name="Kummerfeld S."/>
            <person name="Madera M."/>
            <person name="Konfortov B.A."/>
            <person name="Rivero F."/>
            <person name="Bankier A.T."/>
            <person name="Lehmann R."/>
            <person name="Hamlin N."/>
            <person name="Davies R."/>
            <person name="Gaudet P."/>
            <person name="Fey P."/>
            <person name="Pilcher K."/>
            <person name="Chen G."/>
            <person name="Saunders D."/>
            <person name="Sodergren E.J."/>
            <person name="Davis P."/>
            <person name="Kerhornou A."/>
            <person name="Nie X."/>
            <person name="Hall N."/>
            <person name="Anjard C."/>
            <person name="Hemphill L."/>
            <person name="Bason N."/>
            <person name="Farbrother P."/>
            <person name="Desany B."/>
            <person name="Just E."/>
            <person name="Morio T."/>
            <person name="Rost R."/>
            <person name="Churcher C.M."/>
            <person name="Cooper J."/>
            <person name="Haydock S."/>
            <person name="van Driessche N."/>
            <person name="Cronin A."/>
            <person name="Goodhead I."/>
            <person name="Muzny D.M."/>
            <person name="Mourier T."/>
            <person name="Pain A."/>
            <person name="Lu M."/>
            <person name="Harper D."/>
            <person name="Lindsay R."/>
            <person name="Hauser H."/>
            <person name="James K.D."/>
            <person name="Quiles M."/>
            <person name="Madan Babu M."/>
            <person name="Saito T."/>
            <person name="Buchrieser C."/>
            <person name="Wardroper A."/>
            <person name="Felder M."/>
            <person name="Thangavelu M."/>
            <person name="Johnson D."/>
            <person name="Knights A."/>
            <person name="Loulseged H."/>
            <person name="Mungall K.L."/>
            <person name="Oliver K."/>
            <person name="Price C."/>
            <person name="Quail M.A."/>
            <person name="Urushihara H."/>
            <person name="Hernandez J."/>
            <person name="Rabbinowitsch E."/>
            <person name="Steffen D."/>
            <person name="Sanders M."/>
            <person name="Ma J."/>
            <person name="Kohara Y."/>
            <person name="Sharp S."/>
            <person name="Simmonds M.N."/>
            <person name="Spiegler S."/>
            <person name="Tivey A."/>
            <person name="Sugano S."/>
            <person name="White B."/>
            <person name="Walker D."/>
            <person name="Woodward J.R."/>
            <person name="Winckler T."/>
            <person name="Tanaka Y."/>
            <person name="Shaulsky G."/>
            <person name="Schleicher M."/>
            <person name="Weinstock G.M."/>
            <person name="Rosenthal A."/>
            <person name="Cox E.C."/>
            <person name="Chisholm R.L."/>
            <person name="Gibbs R.A."/>
            <person name="Loomis W.F."/>
            <person name="Platzer M."/>
            <person name="Kay R.R."/>
            <person name="Williams J.G."/>
            <person name="Dear P.H."/>
            <person name="Noegel A.A."/>
            <person name="Barrell B.G."/>
            <person name="Kuspa A."/>
        </authorList>
    </citation>
    <scope>NUCLEOTIDE SEQUENCE [LARGE SCALE GENOMIC DNA]</scope>
    <source>
        <strain>AX4</strain>
    </source>
</reference>
<gene>
    <name type="primary">rbsk</name>
    <name type="ORF">DDB_G0280893</name>
</gene>
<feature type="chain" id="PRO_0000328525" description="Ribokinase">
    <location>
        <begin position="1"/>
        <end position="318"/>
    </location>
</feature>
<feature type="active site" description="Proton acceptor" evidence="1">
    <location>
        <position position="270"/>
    </location>
</feature>
<feature type="binding site" evidence="1">
    <location>
        <begin position="12"/>
        <end position="14"/>
    </location>
    <ligand>
        <name>substrate</name>
    </ligand>
</feature>
<feature type="binding site" evidence="1">
    <location>
        <begin position="40"/>
        <end position="44"/>
    </location>
    <ligand>
        <name>substrate</name>
    </ligand>
</feature>
<feature type="binding site" evidence="1">
    <location>
        <position position="141"/>
    </location>
    <ligand>
        <name>substrate</name>
    </ligand>
</feature>
<feature type="binding site" evidence="1">
    <location>
        <position position="188"/>
    </location>
    <ligand>
        <name>ATP</name>
        <dbReference type="ChEBI" id="CHEBI:30616"/>
    </ligand>
</feature>
<feature type="binding site" evidence="1">
    <location>
        <begin position="235"/>
        <end position="240"/>
    </location>
    <ligand>
        <name>ATP</name>
        <dbReference type="ChEBI" id="CHEBI:30616"/>
    </ligand>
</feature>
<feature type="binding site" evidence="1">
    <location>
        <position position="264"/>
    </location>
    <ligand>
        <name>K(+)</name>
        <dbReference type="ChEBI" id="CHEBI:29103"/>
    </ligand>
</feature>
<feature type="binding site" evidence="1">
    <location>
        <position position="266"/>
    </location>
    <ligand>
        <name>K(+)</name>
        <dbReference type="ChEBI" id="CHEBI:29103"/>
    </ligand>
</feature>
<feature type="binding site" evidence="1">
    <location>
        <begin position="269"/>
        <end position="270"/>
    </location>
    <ligand>
        <name>ATP</name>
        <dbReference type="ChEBI" id="CHEBI:30616"/>
    </ligand>
</feature>
<feature type="binding site" evidence="1">
    <location>
        <position position="270"/>
    </location>
    <ligand>
        <name>substrate</name>
    </ligand>
</feature>
<feature type="binding site" evidence="1">
    <location>
        <position position="301"/>
    </location>
    <ligand>
        <name>K(+)</name>
        <dbReference type="ChEBI" id="CHEBI:29103"/>
    </ligand>
</feature>
<feature type="binding site" evidence="1">
    <location>
        <position position="304"/>
    </location>
    <ligand>
        <name>K(+)</name>
        <dbReference type="ChEBI" id="CHEBI:29103"/>
    </ligand>
</feature>
<feature type="binding site" evidence="1">
    <location>
        <position position="306"/>
    </location>
    <ligand>
        <name>K(+)</name>
        <dbReference type="ChEBI" id="CHEBI:29103"/>
    </ligand>
</feature>
<feature type="binding site" evidence="1">
    <location>
        <position position="310"/>
    </location>
    <ligand>
        <name>K(+)</name>
        <dbReference type="ChEBI" id="CHEBI:29103"/>
    </ligand>
</feature>
<organism>
    <name type="scientific">Dictyostelium discoideum</name>
    <name type="common">Social amoeba</name>
    <dbReference type="NCBI Taxonomy" id="44689"/>
    <lineage>
        <taxon>Eukaryota</taxon>
        <taxon>Amoebozoa</taxon>
        <taxon>Evosea</taxon>
        <taxon>Eumycetozoa</taxon>
        <taxon>Dictyostelia</taxon>
        <taxon>Dictyosteliales</taxon>
        <taxon>Dictyosteliaceae</taxon>
        <taxon>Dictyostelium</taxon>
    </lineage>
</organism>
<sequence length="318" mass="34811">MENNITVVGASNWDTFIYVDKMPRVGETIKGTDLKVSYGGKAANQAVQASLLGSNCTLITKLGDDPSGVNTLKNFKDKNINCEFVSVVSNVPSGCATIIVDKNGDNNIIIIGGSNDLLNEKDVDNAKSQIQNSSLLLCQLEVSLNVTLHALKIAKESNKCKTMLNLTPINNDPLILEMFKFVDILIVNEIELIGLYNSTFNNNNNNEKDFNINQLMEMCDNLIKKFENFENIIVTLGGNGQLLVSKENNKNCHIELKEKVKVVDTSGAGDSFIGSFAHYLVTENKPLKDSIESASKVASISVTRHGTQTSYPKSNEIN</sequence>
<name>RBSK_DICDI</name>
<comment type="function">
    <text evidence="1">Catalyzes the phosphorylation of ribose at O-5 in a reaction requiring ATP and magnesium. The resulting D-ribose-5-phosphate can then be used either for sythesis of nucleotides, histidine, and tryptophan, or as a component of the pentose phosphate pathway.</text>
</comment>
<comment type="catalytic activity">
    <reaction evidence="1">
        <text>D-ribose + ATP = D-ribose 5-phosphate + ADP + H(+)</text>
        <dbReference type="Rhea" id="RHEA:13697"/>
        <dbReference type="ChEBI" id="CHEBI:15378"/>
        <dbReference type="ChEBI" id="CHEBI:30616"/>
        <dbReference type="ChEBI" id="CHEBI:47013"/>
        <dbReference type="ChEBI" id="CHEBI:78346"/>
        <dbReference type="ChEBI" id="CHEBI:456216"/>
        <dbReference type="EC" id="2.7.1.15"/>
    </reaction>
</comment>
<comment type="cofactor">
    <cofactor evidence="1">
        <name>Mg(2+)</name>
        <dbReference type="ChEBI" id="CHEBI:18420"/>
    </cofactor>
    <text evidence="1">Requires a divalent cation, most likely magnesium in vivo, as an electrophilic catalyst to aid phosphoryl group transfer. It is the chelate of the metal and the nucleotide that is the actual substrate.</text>
</comment>
<comment type="activity regulation">
    <text evidence="1">Activated by a monovalent cation that binds near, but not in, the active site. The most likely occupant of the site in vivo is potassium. Ion binding induces a conformational change that may alter substrate affinity.</text>
</comment>
<comment type="pathway">
    <text evidence="1">Carbohydrate metabolism; D-ribose degradation; D-ribose 5-phosphate from beta-D-ribopyranose: step 2/2.</text>
</comment>
<comment type="subunit">
    <text evidence="1">Homodimer.</text>
</comment>
<comment type="subcellular location">
    <subcellularLocation>
        <location evidence="1">Cytoplasm</location>
    </subcellularLocation>
    <subcellularLocation>
        <location evidence="1">Nucleus</location>
    </subcellularLocation>
</comment>
<comment type="similarity">
    <text evidence="1">Belongs to the carbohydrate kinase PfkB family. Ribokinase subfamily.</text>
</comment>
<accession>Q54UQ4</accession>
<proteinExistence type="inferred from homology"/>
<dbReference type="EC" id="2.7.1.15" evidence="1"/>
<dbReference type="EMBL" id="AAFI02000039">
    <property type="protein sequence ID" value="EAL66988.2"/>
    <property type="molecule type" value="Genomic_DNA"/>
</dbReference>
<dbReference type="RefSeq" id="XP_640967.2">
    <property type="nucleotide sequence ID" value="XM_635875.2"/>
</dbReference>
<dbReference type="SMR" id="Q54UQ4"/>
<dbReference type="FunCoup" id="Q54UQ4">
    <property type="interactions" value="67"/>
</dbReference>
<dbReference type="STRING" id="44689.Q54UQ4"/>
<dbReference type="PaxDb" id="44689-DDB0304695"/>
<dbReference type="EnsemblProtists" id="EAL66988">
    <property type="protein sequence ID" value="EAL66988"/>
    <property type="gene ID" value="DDB_G0280893"/>
</dbReference>
<dbReference type="GeneID" id="8622771"/>
<dbReference type="KEGG" id="ddi:DDB_G0280893"/>
<dbReference type="dictyBase" id="DDB_G0280893">
    <property type="gene designation" value="rbsk"/>
</dbReference>
<dbReference type="VEuPathDB" id="AmoebaDB:DDB_G0280893"/>
<dbReference type="eggNOG" id="KOG2855">
    <property type="taxonomic scope" value="Eukaryota"/>
</dbReference>
<dbReference type="HOGENOM" id="CLU_027634_2_3_1"/>
<dbReference type="InParanoid" id="Q54UQ4"/>
<dbReference type="OMA" id="DIVLIQQ"/>
<dbReference type="PhylomeDB" id="Q54UQ4"/>
<dbReference type="Reactome" id="R-DDI-71336">
    <property type="pathway name" value="Pentose phosphate pathway"/>
</dbReference>
<dbReference type="UniPathway" id="UPA00916">
    <property type="reaction ID" value="UER00889"/>
</dbReference>
<dbReference type="PRO" id="PR:Q54UQ4"/>
<dbReference type="Proteomes" id="UP000002195">
    <property type="component" value="Chromosome 3"/>
</dbReference>
<dbReference type="GO" id="GO:0005737">
    <property type="term" value="C:cytoplasm"/>
    <property type="evidence" value="ECO:0007669"/>
    <property type="project" value="UniProtKB-SubCell"/>
</dbReference>
<dbReference type="GO" id="GO:0005634">
    <property type="term" value="C:nucleus"/>
    <property type="evidence" value="ECO:0007669"/>
    <property type="project" value="UniProtKB-SubCell"/>
</dbReference>
<dbReference type="GO" id="GO:0005524">
    <property type="term" value="F:ATP binding"/>
    <property type="evidence" value="ECO:0007669"/>
    <property type="project" value="UniProtKB-UniRule"/>
</dbReference>
<dbReference type="GO" id="GO:0046872">
    <property type="term" value="F:metal ion binding"/>
    <property type="evidence" value="ECO:0007669"/>
    <property type="project" value="UniProtKB-KW"/>
</dbReference>
<dbReference type="GO" id="GO:0004747">
    <property type="term" value="F:ribokinase activity"/>
    <property type="evidence" value="ECO:0007669"/>
    <property type="project" value="UniProtKB-UniRule"/>
</dbReference>
<dbReference type="GO" id="GO:0019303">
    <property type="term" value="P:D-ribose catabolic process"/>
    <property type="evidence" value="ECO:0007669"/>
    <property type="project" value="UniProtKB-UniRule"/>
</dbReference>
<dbReference type="CDD" id="cd01174">
    <property type="entry name" value="ribokinase"/>
    <property type="match status" value="1"/>
</dbReference>
<dbReference type="Gene3D" id="3.40.1190.20">
    <property type="match status" value="1"/>
</dbReference>
<dbReference type="HAMAP" id="MF_01987">
    <property type="entry name" value="Ribokinase"/>
    <property type="match status" value="1"/>
</dbReference>
<dbReference type="InterPro" id="IPR011611">
    <property type="entry name" value="PfkB_dom"/>
</dbReference>
<dbReference type="InterPro" id="IPR002139">
    <property type="entry name" value="Ribo/fructo_kinase"/>
</dbReference>
<dbReference type="InterPro" id="IPR011877">
    <property type="entry name" value="Ribokinase"/>
</dbReference>
<dbReference type="InterPro" id="IPR029056">
    <property type="entry name" value="Ribokinase-like"/>
</dbReference>
<dbReference type="PANTHER" id="PTHR10584:SF166">
    <property type="entry name" value="RIBOKINASE"/>
    <property type="match status" value="1"/>
</dbReference>
<dbReference type="PANTHER" id="PTHR10584">
    <property type="entry name" value="SUGAR KINASE"/>
    <property type="match status" value="1"/>
</dbReference>
<dbReference type="Pfam" id="PF00294">
    <property type="entry name" value="PfkB"/>
    <property type="match status" value="1"/>
</dbReference>
<dbReference type="PRINTS" id="PR00990">
    <property type="entry name" value="RIBOKINASE"/>
</dbReference>
<dbReference type="SUPFAM" id="SSF53613">
    <property type="entry name" value="Ribokinase-like"/>
    <property type="match status" value="1"/>
</dbReference>